<protein>
    <recommendedName>
        <fullName>Putative O-methyltransferase MLBr01075</fullName>
        <ecNumber>2.1.1.-</ecNumber>
    </recommendedName>
</protein>
<evidence type="ECO:0000250" key="1"/>
<evidence type="ECO:0000255" key="2">
    <source>
        <dbReference type="PROSITE-ProRule" id="PRU01019"/>
    </source>
</evidence>
<sequence length="224" mass="23221">MYGTGNNAVTPDQAAASRADSLFAHAEGSISEDAILASARERSEEIGARAVTPAVGALLSLLTKLSGGKAVAEVGTGAGVSGLWLLSGMSYDGVLTTIDIEPEYLRLAKQAFSEAGIGPSRTRLISGRGQDVLTRLADESYDLVFIDADPIDQPAYVVEGVRLLRSCGIIVVHRAALGGRAGDPAARDAEVTAVREAARLIAENERLTPALVPLGDGLLAAVRE</sequence>
<name>Y1075_MYCLB</name>
<reference key="1">
    <citation type="journal article" date="2009" name="Nat. Genet.">
        <title>Comparative genomic and phylogeographic analysis of Mycobacterium leprae.</title>
        <authorList>
            <person name="Monot M."/>
            <person name="Honore N."/>
            <person name="Garnier T."/>
            <person name="Zidane N."/>
            <person name="Sherafi D."/>
            <person name="Paniz-Mondolfi A."/>
            <person name="Matsuoka M."/>
            <person name="Taylor G.M."/>
            <person name="Donoghue H.D."/>
            <person name="Bouwman A."/>
            <person name="Mays S."/>
            <person name="Watson C."/>
            <person name="Lockwood D."/>
            <person name="Khamispour A."/>
            <person name="Dowlati Y."/>
            <person name="Jianping S."/>
            <person name="Rea T.H."/>
            <person name="Vera-Cabrera L."/>
            <person name="Stefani M.M."/>
            <person name="Banu S."/>
            <person name="Macdonald M."/>
            <person name="Sapkota B.R."/>
            <person name="Spencer J.S."/>
            <person name="Thomas J."/>
            <person name="Harshman K."/>
            <person name="Singh P."/>
            <person name="Busso P."/>
            <person name="Gattiker A."/>
            <person name="Rougemont J."/>
            <person name="Brennan P.J."/>
            <person name="Cole S.T."/>
        </authorList>
    </citation>
    <scope>NUCLEOTIDE SEQUENCE [LARGE SCALE GENOMIC DNA]</scope>
    <source>
        <strain>Br4923</strain>
    </source>
</reference>
<feature type="chain" id="PRO_0000380096" description="Putative O-methyltransferase MLBr01075">
    <location>
        <begin position="1"/>
        <end position="224"/>
    </location>
</feature>
<feature type="binding site" evidence="2">
    <location>
        <position position="51"/>
    </location>
    <ligand>
        <name>S-adenosyl-L-methionine</name>
        <dbReference type="ChEBI" id="CHEBI:59789"/>
    </ligand>
</feature>
<feature type="binding site" evidence="2">
    <location>
        <position position="73"/>
    </location>
    <ligand>
        <name>S-adenosyl-L-methionine</name>
        <dbReference type="ChEBI" id="CHEBI:59789"/>
    </ligand>
</feature>
<feature type="binding site" evidence="2">
    <location>
        <begin position="75"/>
        <end position="76"/>
    </location>
    <ligand>
        <name>S-adenosyl-L-methionine</name>
        <dbReference type="ChEBI" id="CHEBI:59789"/>
    </ligand>
</feature>
<feature type="binding site" evidence="2">
    <location>
        <position position="81"/>
    </location>
    <ligand>
        <name>S-adenosyl-L-methionine</name>
        <dbReference type="ChEBI" id="CHEBI:59789"/>
    </ligand>
</feature>
<feature type="binding site" evidence="2">
    <location>
        <position position="99"/>
    </location>
    <ligand>
        <name>S-adenosyl-L-methionine</name>
        <dbReference type="ChEBI" id="CHEBI:59789"/>
    </ligand>
</feature>
<feature type="binding site" evidence="2">
    <location>
        <position position="100"/>
    </location>
    <ligand>
        <name>S-adenosyl-L-methionine</name>
        <dbReference type="ChEBI" id="CHEBI:59789"/>
    </ligand>
</feature>
<feature type="binding site" evidence="1">
    <location>
        <position position="147"/>
    </location>
    <ligand>
        <name>substrate</name>
    </ligand>
</feature>
<feature type="binding site" evidence="2">
    <location>
        <position position="149"/>
    </location>
    <ligand>
        <name>S-adenosyl-L-methionine</name>
        <dbReference type="ChEBI" id="CHEBI:59789"/>
    </ligand>
</feature>
<organism>
    <name type="scientific">Mycobacterium leprae (strain Br4923)</name>
    <dbReference type="NCBI Taxonomy" id="561304"/>
    <lineage>
        <taxon>Bacteria</taxon>
        <taxon>Bacillati</taxon>
        <taxon>Actinomycetota</taxon>
        <taxon>Actinomycetes</taxon>
        <taxon>Mycobacteriales</taxon>
        <taxon>Mycobacteriaceae</taxon>
        <taxon>Mycobacterium</taxon>
    </lineage>
</organism>
<proteinExistence type="inferred from homology"/>
<gene>
    <name type="ordered locus">MLBr01075</name>
</gene>
<comment type="similarity">
    <text evidence="2">Belongs to the class I-like SAM-binding methyltransferase superfamily. Cation-dependent O-methyltransferase family.</text>
</comment>
<keyword id="KW-0489">Methyltransferase</keyword>
<keyword id="KW-0949">S-adenosyl-L-methionine</keyword>
<keyword id="KW-0808">Transferase</keyword>
<accession>B8ZQZ1</accession>
<dbReference type="EC" id="2.1.1.-"/>
<dbReference type="EMBL" id="FM211192">
    <property type="protein sequence ID" value="CAR71170.1"/>
    <property type="molecule type" value="Genomic_DNA"/>
</dbReference>
<dbReference type="SMR" id="B8ZQZ1"/>
<dbReference type="KEGG" id="mlb:MLBr01075"/>
<dbReference type="HOGENOM" id="CLU_067676_2_0_11"/>
<dbReference type="Proteomes" id="UP000006900">
    <property type="component" value="Chromosome"/>
</dbReference>
<dbReference type="GO" id="GO:0008171">
    <property type="term" value="F:O-methyltransferase activity"/>
    <property type="evidence" value="ECO:0007669"/>
    <property type="project" value="InterPro"/>
</dbReference>
<dbReference type="GO" id="GO:0008757">
    <property type="term" value="F:S-adenosylmethionine-dependent methyltransferase activity"/>
    <property type="evidence" value="ECO:0007669"/>
    <property type="project" value="TreeGrafter"/>
</dbReference>
<dbReference type="GO" id="GO:0032259">
    <property type="term" value="P:methylation"/>
    <property type="evidence" value="ECO:0007669"/>
    <property type="project" value="UniProtKB-KW"/>
</dbReference>
<dbReference type="CDD" id="cd02440">
    <property type="entry name" value="AdoMet_MTases"/>
    <property type="match status" value="1"/>
</dbReference>
<dbReference type="Gene3D" id="3.40.50.150">
    <property type="entry name" value="Vaccinia Virus protein VP39"/>
    <property type="match status" value="1"/>
</dbReference>
<dbReference type="InterPro" id="IPR050362">
    <property type="entry name" value="Cation-dep_OMT"/>
</dbReference>
<dbReference type="InterPro" id="IPR029063">
    <property type="entry name" value="SAM-dependent_MTases_sf"/>
</dbReference>
<dbReference type="InterPro" id="IPR002935">
    <property type="entry name" value="SAM_O-MeTrfase"/>
</dbReference>
<dbReference type="PANTHER" id="PTHR10509:SF85">
    <property type="entry name" value="O-METHYLTRANSFERASE RV1220C-RELATED"/>
    <property type="match status" value="1"/>
</dbReference>
<dbReference type="PANTHER" id="PTHR10509">
    <property type="entry name" value="O-METHYLTRANSFERASE-RELATED"/>
    <property type="match status" value="1"/>
</dbReference>
<dbReference type="Pfam" id="PF01596">
    <property type="entry name" value="Methyltransf_3"/>
    <property type="match status" value="1"/>
</dbReference>
<dbReference type="SUPFAM" id="SSF53335">
    <property type="entry name" value="S-adenosyl-L-methionine-dependent methyltransferases"/>
    <property type="match status" value="1"/>
</dbReference>
<dbReference type="PROSITE" id="PS51682">
    <property type="entry name" value="SAM_OMT_I"/>
    <property type="match status" value="1"/>
</dbReference>